<sequence>MESDNLQDPQEETLTCSICQGIFMDPVYLRCGHKFCETCLLLFQEDIKFPAYCPTCRQPCNQRYINDISLKKQVFIVRKKRLMEYLNSEEHKCVTHKAKKMIFCDKSKILLCHLCSDSQEHSGHTHCSIDVAVQEKMEELLKHMDSLWQRLKIQQNYVEKERRMTLWWLKSVKLREEVIKRVYGKQCPPLSEERDQHIECLRHQSNTTLEELRKSEATIVHERNQLTEVYQELMTMSQRPYQELLVQDLDDLFRRSKLAAKVDMPQGMIPRLRAHSIPGLTARLNSFRVKISFKHSIMFGYNSVRPFDIRLLHESTSLDSAKTHRVSWGKKSFSRGKYYWEVDLKDYRRWTVGVCKDPWLRGRSYVVTPTDIFLLECLRNKDHYILITRIGREHYIEKPVGQVGVFLDCEGGYVSFVDVAKSSLILSYSPGTFHCAVRPFFFAAYT</sequence>
<keyword id="KW-0479">Metal-binding</keyword>
<keyword id="KW-1185">Reference proteome</keyword>
<keyword id="KW-0862">Zinc</keyword>
<keyword id="KW-0863">Zinc-finger</keyword>
<evidence type="ECO:0000255" key="1"/>
<evidence type="ECO:0000255" key="2">
    <source>
        <dbReference type="PROSITE-ProRule" id="PRU00024"/>
    </source>
</evidence>
<evidence type="ECO:0000255" key="3">
    <source>
        <dbReference type="PROSITE-ProRule" id="PRU00175"/>
    </source>
</evidence>
<evidence type="ECO:0000255" key="4">
    <source>
        <dbReference type="PROSITE-ProRule" id="PRU00548"/>
    </source>
</evidence>
<evidence type="ECO:0000269" key="5">
    <source>
    </source>
</evidence>
<evidence type="ECO:0000305" key="6"/>
<evidence type="ECO:0000312" key="7">
    <source>
        <dbReference type="MGI" id="MGI:3647365"/>
    </source>
</evidence>
<reference evidence="6" key="1">
    <citation type="journal article" date="2009" name="PLoS Biol.">
        <title>Lineage-specific biology revealed by a finished genome assembly of the mouse.</title>
        <authorList>
            <person name="Church D.M."/>
            <person name="Goodstadt L."/>
            <person name="Hillier L.W."/>
            <person name="Zody M.C."/>
            <person name="Goldstein S."/>
            <person name="She X."/>
            <person name="Bult C.J."/>
            <person name="Agarwala R."/>
            <person name="Cherry J.L."/>
            <person name="DiCuccio M."/>
            <person name="Hlavina W."/>
            <person name="Kapustin Y."/>
            <person name="Meric P."/>
            <person name="Maglott D."/>
            <person name="Birtle Z."/>
            <person name="Marques A.C."/>
            <person name="Graves T."/>
            <person name="Zhou S."/>
            <person name="Teague B."/>
            <person name="Potamousis K."/>
            <person name="Churas C."/>
            <person name="Place M."/>
            <person name="Herschleb J."/>
            <person name="Runnheim R."/>
            <person name="Forrest D."/>
            <person name="Amos-Landgraf J."/>
            <person name="Schwartz D.C."/>
            <person name="Cheng Z."/>
            <person name="Lindblad-Toh K."/>
            <person name="Eichler E.E."/>
            <person name="Ponting C.P."/>
        </authorList>
    </citation>
    <scope>NUCLEOTIDE SEQUENCE [LARGE SCALE GENOMIC DNA]</scope>
    <source>
        <strain>C57BL/6J</strain>
    </source>
</reference>
<reference evidence="6" key="2">
    <citation type="journal article" date="2009" name="Gene Expr. Patterns">
        <title>Trim43a, Trim43b, and Trim43c: Novel mouse genes expressed specifically in mouse preimplantation embryos.</title>
        <authorList>
            <person name="Stanghellini I."/>
            <person name="Falco G."/>
            <person name="Lee S.L."/>
            <person name="Monti M."/>
            <person name="Ko M.S."/>
        </authorList>
    </citation>
    <scope>IDENTIFICATION</scope>
    <scope>DEVELOPMENTAL STAGE</scope>
</reference>
<accession>P86449</accession>
<comment type="developmental stage">
    <text evidence="5">Expression is restricted to preimplantation embryos and peaks at the 8-cell to morula stage.</text>
</comment>
<comment type="similarity">
    <text evidence="1">Belongs to the TRIM/RBCC family.</text>
</comment>
<dbReference type="EMBL" id="CT030259">
    <property type="status" value="NOT_ANNOTATED_CDS"/>
    <property type="molecule type" value="Genomic_DNA"/>
</dbReference>
<dbReference type="EMBL" id="CT030651">
    <property type="status" value="NOT_ANNOTATED_CDS"/>
    <property type="molecule type" value="Genomic_DNA"/>
</dbReference>
<dbReference type="CCDS" id="CCDS52883.1"/>
<dbReference type="RefSeq" id="NP_001171329.1">
    <property type="nucleotide sequence ID" value="NM_001177858.1"/>
</dbReference>
<dbReference type="RefSeq" id="XP_006511421.1">
    <property type="nucleotide sequence ID" value="XM_006511358.5"/>
</dbReference>
<dbReference type="SMR" id="P86449"/>
<dbReference type="FunCoup" id="P86449">
    <property type="interactions" value="164"/>
</dbReference>
<dbReference type="STRING" id="10090.ENSMUSP00000129255"/>
<dbReference type="iPTMnet" id="P86449"/>
<dbReference type="PhosphoSitePlus" id="P86449"/>
<dbReference type="PaxDb" id="10090-ENSMUSP00000129255"/>
<dbReference type="Ensembl" id="ENSMUST00000163255.9">
    <property type="protein sequence ID" value="ENSMUSP00000129255.3"/>
    <property type="gene ID" value="ENSMUSG00000067399.11"/>
</dbReference>
<dbReference type="GeneID" id="666731"/>
<dbReference type="KEGG" id="mmu:666731"/>
<dbReference type="UCSC" id="uc012gyb.1">
    <property type="organism name" value="mouse"/>
</dbReference>
<dbReference type="AGR" id="MGI:3647365"/>
<dbReference type="CTD" id="666731"/>
<dbReference type="MGI" id="MGI:3647365">
    <property type="gene designation" value="Trim43c"/>
</dbReference>
<dbReference type="VEuPathDB" id="HostDB:ENSMUSG00000067399"/>
<dbReference type="eggNOG" id="KOG2177">
    <property type="taxonomic scope" value="Eukaryota"/>
</dbReference>
<dbReference type="GeneTree" id="ENSGT00940000160005"/>
<dbReference type="HOGENOM" id="CLU_013137_0_3_1"/>
<dbReference type="InParanoid" id="P86449"/>
<dbReference type="OMA" id="NCPACSE"/>
<dbReference type="OrthoDB" id="9448301at2759"/>
<dbReference type="PhylomeDB" id="P86449"/>
<dbReference type="TreeFam" id="TF338674"/>
<dbReference type="BioGRID-ORCS" id="666731">
    <property type="hits" value="2 hits in 77 CRISPR screens"/>
</dbReference>
<dbReference type="PRO" id="PR:P86449"/>
<dbReference type="Proteomes" id="UP000000589">
    <property type="component" value="Chromosome 9"/>
</dbReference>
<dbReference type="RNAct" id="P86449">
    <property type="molecule type" value="protein"/>
</dbReference>
<dbReference type="Bgee" id="ENSMUSG00000067399">
    <property type="expression patterns" value="Expressed in blastoderm cell in morula and 29 other cell types or tissues"/>
</dbReference>
<dbReference type="ExpressionAtlas" id="P86449">
    <property type="expression patterns" value="baseline and differential"/>
</dbReference>
<dbReference type="GO" id="GO:0008270">
    <property type="term" value="F:zinc ion binding"/>
    <property type="evidence" value="ECO:0007669"/>
    <property type="project" value="UniProtKB-KW"/>
</dbReference>
<dbReference type="CDD" id="cd23133">
    <property type="entry name" value="RING-HC_MmTRIM43-like"/>
    <property type="match status" value="1"/>
</dbReference>
<dbReference type="Gene3D" id="2.60.120.920">
    <property type="match status" value="1"/>
</dbReference>
<dbReference type="Gene3D" id="3.30.160.60">
    <property type="entry name" value="Classic Zinc Finger"/>
    <property type="match status" value="1"/>
</dbReference>
<dbReference type="Gene3D" id="3.30.40.10">
    <property type="entry name" value="Zinc/RING finger domain, C3HC4 (zinc finger)"/>
    <property type="match status" value="1"/>
</dbReference>
<dbReference type="InterPro" id="IPR001870">
    <property type="entry name" value="B30.2/SPRY"/>
</dbReference>
<dbReference type="InterPro" id="IPR043136">
    <property type="entry name" value="B30.2/SPRY_sf"/>
</dbReference>
<dbReference type="InterPro" id="IPR003879">
    <property type="entry name" value="Butyrophylin_SPRY"/>
</dbReference>
<dbReference type="InterPro" id="IPR013320">
    <property type="entry name" value="ConA-like_dom_sf"/>
</dbReference>
<dbReference type="InterPro" id="IPR003877">
    <property type="entry name" value="SPRY_dom"/>
</dbReference>
<dbReference type="InterPro" id="IPR050143">
    <property type="entry name" value="TRIM/RBCC"/>
</dbReference>
<dbReference type="InterPro" id="IPR000315">
    <property type="entry name" value="Znf_B-box"/>
</dbReference>
<dbReference type="InterPro" id="IPR018957">
    <property type="entry name" value="Znf_C3HC4_RING-type"/>
</dbReference>
<dbReference type="InterPro" id="IPR001841">
    <property type="entry name" value="Znf_RING"/>
</dbReference>
<dbReference type="InterPro" id="IPR013083">
    <property type="entry name" value="Znf_RING/FYVE/PHD"/>
</dbReference>
<dbReference type="InterPro" id="IPR017907">
    <property type="entry name" value="Znf_RING_CS"/>
</dbReference>
<dbReference type="PANTHER" id="PTHR24103">
    <property type="entry name" value="E3 UBIQUITIN-PROTEIN LIGASE TRIM"/>
    <property type="match status" value="1"/>
</dbReference>
<dbReference type="Pfam" id="PF00622">
    <property type="entry name" value="SPRY"/>
    <property type="match status" value="1"/>
</dbReference>
<dbReference type="Pfam" id="PF00097">
    <property type="entry name" value="zf-C3HC4"/>
    <property type="match status" value="1"/>
</dbReference>
<dbReference type="PRINTS" id="PR01407">
    <property type="entry name" value="BUTYPHLNCDUF"/>
</dbReference>
<dbReference type="SMART" id="SM00184">
    <property type="entry name" value="RING"/>
    <property type="match status" value="1"/>
</dbReference>
<dbReference type="SUPFAM" id="SSF57845">
    <property type="entry name" value="B-box zinc-binding domain"/>
    <property type="match status" value="1"/>
</dbReference>
<dbReference type="SUPFAM" id="SSF49899">
    <property type="entry name" value="Concanavalin A-like lectins/glucanases"/>
    <property type="match status" value="1"/>
</dbReference>
<dbReference type="SUPFAM" id="SSF57850">
    <property type="entry name" value="RING/U-box"/>
    <property type="match status" value="1"/>
</dbReference>
<dbReference type="PROSITE" id="PS50188">
    <property type="entry name" value="B302_SPRY"/>
    <property type="match status" value="1"/>
</dbReference>
<dbReference type="PROSITE" id="PS50119">
    <property type="entry name" value="ZF_BBOX"/>
    <property type="match status" value="1"/>
</dbReference>
<dbReference type="PROSITE" id="PS00518">
    <property type="entry name" value="ZF_RING_1"/>
    <property type="match status" value="1"/>
</dbReference>
<dbReference type="PROSITE" id="PS50089">
    <property type="entry name" value="ZF_RING_2"/>
    <property type="match status" value="1"/>
</dbReference>
<organism>
    <name type="scientific">Mus musculus</name>
    <name type="common">Mouse</name>
    <dbReference type="NCBI Taxonomy" id="10090"/>
    <lineage>
        <taxon>Eukaryota</taxon>
        <taxon>Metazoa</taxon>
        <taxon>Chordata</taxon>
        <taxon>Craniata</taxon>
        <taxon>Vertebrata</taxon>
        <taxon>Euteleostomi</taxon>
        <taxon>Mammalia</taxon>
        <taxon>Eutheria</taxon>
        <taxon>Euarchontoglires</taxon>
        <taxon>Glires</taxon>
        <taxon>Rodentia</taxon>
        <taxon>Myomorpha</taxon>
        <taxon>Muroidea</taxon>
        <taxon>Muridae</taxon>
        <taxon>Murinae</taxon>
        <taxon>Mus</taxon>
        <taxon>Mus</taxon>
    </lineage>
</organism>
<gene>
    <name evidence="7" type="primary">Trim43c</name>
</gene>
<feature type="chain" id="PRO_0000392436" description="Tripartite motif-containing protein 43C">
    <location>
        <begin position="1"/>
        <end position="446"/>
    </location>
</feature>
<feature type="domain" description="B30.2/SPRY" evidence="4">
    <location>
        <begin position="271"/>
        <end position="446"/>
    </location>
</feature>
<feature type="zinc finger region" description="RING-type" evidence="3">
    <location>
        <begin position="16"/>
        <end position="57"/>
    </location>
</feature>
<feature type="zinc finger region" description="B box-type" evidence="2">
    <location>
        <begin position="88"/>
        <end position="129"/>
    </location>
</feature>
<feature type="binding site" evidence="2">
    <location>
        <position position="93"/>
    </location>
    <ligand>
        <name>Zn(2+)</name>
        <dbReference type="ChEBI" id="CHEBI:29105"/>
    </ligand>
</feature>
<feature type="binding site" evidence="2">
    <location>
        <position position="96"/>
    </location>
    <ligand>
        <name>Zn(2+)</name>
        <dbReference type="ChEBI" id="CHEBI:29105"/>
    </ligand>
</feature>
<feature type="binding site" evidence="2">
    <location>
        <position position="115"/>
    </location>
    <ligand>
        <name>Zn(2+)</name>
        <dbReference type="ChEBI" id="CHEBI:29105"/>
    </ligand>
</feature>
<feature type="binding site" evidence="2">
    <location>
        <position position="121"/>
    </location>
    <ligand>
        <name>Zn(2+)</name>
        <dbReference type="ChEBI" id="CHEBI:29105"/>
    </ligand>
</feature>
<protein>
    <recommendedName>
        <fullName evidence="7">Tripartite motif-containing protein 43C</fullName>
    </recommendedName>
</protein>
<proteinExistence type="evidence at transcript level"/>
<name>TR43C_MOUSE</name>